<comment type="function">
    <text evidence="1">Required for anaerobic carnitine reduction. May bring reductant to CaiA.</text>
</comment>
<comment type="pathway">
    <text evidence="1">Amine and polyamine metabolism; carnitine metabolism.</text>
</comment>
<comment type="subunit">
    <text evidence="1">Heterodimer of FixA and FixB.</text>
</comment>
<comment type="similarity">
    <text evidence="1">Belongs to the ETF beta-subunit/FixA family.</text>
</comment>
<feature type="chain" id="PRO_0000167895" description="Protein FixA">
    <location>
        <begin position="1"/>
        <end position="256"/>
    </location>
</feature>
<keyword id="KW-0249">Electron transport</keyword>
<keyword id="KW-0813">Transport</keyword>
<organism>
    <name type="scientific">Salmonella paratyphi A (strain ATCC 9150 / SARB42)</name>
    <dbReference type="NCBI Taxonomy" id="295319"/>
    <lineage>
        <taxon>Bacteria</taxon>
        <taxon>Pseudomonadati</taxon>
        <taxon>Pseudomonadota</taxon>
        <taxon>Gammaproteobacteria</taxon>
        <taxon>Enterobacterales</taxon>
        <taxon>Enterobacteriaceae</taxon>
        <taxon>Salmonella</taxon>
    </lineage>
</organism>
<protein>
    <recommendedName>
        <fullName evidence="1">Protein FixA</fullName>
    </recommendedName>
</protein>
<evidence type="ECO:0000255" key="1">
    <source>
        <dbReference type="HAMAP-Rule" id="MF_01055"/>
    </source>
</evidence>
<name>FIXA_SALPA</name>
<proteinExistence type="inferred from homology"/>
<gene>
    <name evidence="1" type="primary">fixA</name>
    <name type="ordered locus">SPA0076</name>
</gene>
<sequence length="256" mass="27252">MKIITCYKCVPDEQDIAINNADGTLDFSKADSKISQYDLNAIEAACQLKQQLGDAQVVAMSVGGKALTNAKGRKDVLSRGPDELIVVIDDQFEQALPQHTATALAAAAQKSGFDLLICGDGSSDLYAQQVGLLVGEALNIPAINGVSKILSLTDSTLTVERELEDEVETLSIPLPAVIAVSTDINTPQIPSMKAILGAAKKPVQVWSPADIGLNSVPAYSTQQVAAPKQRERQRVVIEGDGEEQIAAFVENLRKII</sequence>
<reference key="1">
    <citation type="journal article" date="2004" name="Nat. Genet.">
        <title>Comparison of genome degradation in Paratyphi A and Typhi, human-restricted serovars of Salmonella enterica that cause typhoid.</title>
        <authorList>
            <person name="McClelland M."/>
            <person name="Sanderson K.E."/>
            <person name="Clifton S.W."/>
            <person name="Latreille P."/>
            <person name="Porwollik S."/>
            <person name="Sabo A."/>
            <person name="Meyer R."/>
            <person name="Bieri T."/>
            <person name="Ozersky P."/>
            <person name="McLellan M."/>
            <person name="Harkins C.R."/>
            <person name="Wang C."/>
            <person name="Nguyen C."/>
            <person name="Berghoff A."/>
            <person name="Elliott G."/>
            <person name="Kohlberg S."/>
            <person name="Strong C."/>
            <person name="Du F."/>
            <person name="Carter J."/>
            <person name="Kremizki C."/>
            <person name="Layman D."/>
            <person name="Leonard S."/>
            <person name="Sun H."/>
            <person name="Fulton L."/>
            <person name="Nash W."/>
            <person name="Miner T."/>
            <person name="Minx P."/>
            <person name="Delehaunty K."/>
            <person name="Fronick C."/>
            <person name="Magrini V."/>
            <person name="Nhan M."/>
            <person name="Warren W."/>
            <person name="Florea L."/>
            <person name="Spieth J."/>
            <person name="Wilson R.K."/>
        </authorList>
    </citation>
    <scope>NUCLEOTIDE SEQUENCE [LARGE SCALE GENOMIC DNA]</scope>
    <source>
        <strain>ATCC 9150 / SARB42</strain>
    </source>
</reference>
<dbReference type="EMBL" id="CP000026">
    <property type="protein sequence ID" value="AAV76110.1"/>
    <property type="molecule type" value="Genomic_DNA"/>
</dbReference>
<dbReference type="RefSeq" id="WP_000692187.1">
    <property type="nucleotide sequence ID" value="NC_006511.1"/>
</dbReference>
<dbReference type="SMR" id="Q5PIN4"/>
<dbReference type="KEGG" id="spt:SPA0076"/>
<dbReference type="HOGENOM" id="CLU_060196_2_2_6"/>
<dbReference type="UniPathway" id="UPA00117"/>
<dbReference type="Proteomes" id="UP000008185">
    <property type="component" value="Chromosome"/>
</dbReference>
<dbReference type="GO" id="GO:0009055">
    <property type="term" value="F:electron transfer activity"/>
    <property type="evidence" value="ECO:0007669"/>
    <property type="project" value="InterPro"/>
</dbReference>
<dbReference type="GO" id="GO:0009437">
    <property type="term" value="P:carnitine metabolic process"/>
    <property type="evidence" value="ECO:0007669"/>
    <property type="project" value="UniProtKB-UniRule"/>
</dbReference>
<dbReference type="CDD" id="cd01714">
    <property type="entry name" value="ETF_beta"/>
    <property type="match status" value="1"/>
</dbReference>
<dbReference type="FunFam" id="3.40.50.620:FF:000072">
    <property type="entry name" value="Protein FixA homolog"/>
    <property type="match status" value="1"/>
</dbReference>
<dbReference type="Gene3D" id="3.40.50.620">
    <property type="entry name" value="HUPs"/>
    <property type="match status" value="1"/>
</dbReference>
<dbReference type="HAMAP" id="MF_01055">
    <property type="entry name" value="FixA"/>
    <property type="match status" value="1"/>
</dbReference>
<dbReference type="InterPro" id="IPR000049">
    <property type="entry name" value="ET-Flavoprotein_bsu_CS"/>
</dbReference>
<dbReference type="InterPro" id="IPR014730">
    <property type="entry name" value="ETF_a/b_N"/>
</dbReference>
<dbReference type="InterPro" id="IPR012255">
    <property type="entry name" value="ETF_b"/>
</dbReference>
<dbReference type="InterPro" id="IPR033948">
    <property type="entry name" value="ETF_beta_N"/>
</dbReference>
<dbReference type="InterPro" id="IPR023463">
    <property type="entry name" value="FixA"/>
</dbReference>
<dbReference type="InterPro" id="IPR014729">
    <property type="entry name" value="Rossmann-like_a/b/a_fold"/>
</dbReference>
<dbReference type="NCBIfam" id="NF002888">
    <property type="entry name" value="PRK03359.1"/>
    <property type="match status" value="1"/>
</dbReference>
<dbReference type="PANTHER" id="PTHR21294">
    <property type="entry name" value="ELECTRON TRANSFER FLAVOPROTEIN BETA-SUBUNIT"/>
    <property type="match status" value="1"/>
</dbReference>
<dbReference type="PANTHER" id="PTHR21294:SF17">
    <property type="entry name" value="PROTEIN FIXA"/>
    <property type="match status" value="1"/>
</dbReference>
<dbReference type="Pfam" id="PF01012">
    <property type="entry name" value="ETF"/>
    <property type="match status" value="1"/>
</dbReference>
<dbReference type="PIRSF" id="PIRSF000090">
    <property type="entry name" value="Beta-ETF"/>
    <property type="match status" value="1"/>
</dbReference>
<dbReference type="SMART" id="SM00893">
    <property type="entry name" value="ETF"/>
    <property type="match status" value="1"/>
</dbReference>
<dbReference type="SUPFAM" id="SSF52402">
    <property type="entry name" value="Adenine nucleotide alpha hydrolases-like"/>
    <property type="match status" value="1"/>
</dbReference>
<dbReference type="PROSITE" id="PS01065">
    <property type="entry name" value="ETF_BETA"/>
    <property type="match status" value="1"/>
</dbReference>
<accession>Q5PIN4</accession>